<dbReference type="EMBL" id="AE016819">
    <property type="protein sequence ID" value="AAS53355.1"/>
    <property type="molecule type" value="Genomic_DNA"/>
</dbReference>
<dbReference type="RefSeq" id="NP_985531.1">
    <property type="nucleotide sequence ID" value="NM_210885.1"/>
</dbReference>
<dbReference type="SMR" id="Q754T8"/>
<dbReference type="FunCoup" id="Q754T8">
    <property type="interactions" value="517"/>
</dbReference>
<dbReference type="STRING" id="284811.Q754T8"/>
<dbReference type="EnsemblFungi" id="AAS53355">
    <property type="protein sequence ID" value="AAS53355"/>
    <property type="gene ID" value="AGOS_AFL017W"/>
</dbReference>
<dbReference type="GeneID" id="4621764"/>
<dbReference type="KEGG" id="ago:AGOS_AFL017W"/>
<dbReference type="eggNOG" id="KOG4776">
    <property type="taxonomic scope" value="Eukaryota"/>
</dbReference>
<dbReference type="HOGENOM" id="CLU_062474_1_0_1"/>
<dbReference type="InParanoid" id="Q754T8"/>
<dbReference type="OMA" id="LDWAAYV"/>
<dbReference type="OrthoDB" id="445677at2759"/>
<dbReference type="Proteomes" id="UP000000591">
    <property type="component" value="Chromosome VI"/>
</dbReference>
<dbReference type="GO" id="GO:0005829">
    <property type="term" value="C:cytosol"/>
    <property type="evidence" value="ECO:0007669"/>
    <property type="project" value="EnsemblFungi"/>
</dbReference>
<dbReference type="GO" id="GO:0000812">
    <property type="term" value="C:Swr1 complex"/>
    <property type="evidence" value="ECO:0000318"/>
    <property type="project" value="GO_Central"/>
</dbReference>
<dbReference type="GO" id="GO:0006338">
    <property type="term" value="P:chromatin remodeling"/>
    <property type="evidence" value="ECO:0000318"/>
    <property type="project" value="GO_Central"/>
</dbReference>
<dbReference type="CDD" id="cd22868">
    <property type="entry name" value="Swc5_NTD"/>
    <property type="match status" value="1"/>
</dbReference>
<dbReference type="InterPro" id="IPR011421">
    <property type="entry name" value="BCNT-C"/>
</dbReference>
<dbReference type="InterPro" id="IPR027124">
    <property type="entry name" value="Swc5/CFDP1/2"/>
</dbReference>
<dbReference type="PANTHER" id="PTHR48407">
    <property type="entry name" value="CRANIOFACIAL DEVELOPMENT PROTEIN 1"/>
    <property type="match status" value="1"/>
</dbReference>
<dbReference type="PANTHER" id="PTHR48407:SF1">
    <property type="entry name" value="CRANIOFACIAL DEVELOPMENT PROTEIN 1"/>
    <property type="match status" value="1"/>
</dbReference>
<dbReference type="Pfam" id="PF07572">
    <property type="entry name" value="BCNT"/>
    <property type="match status" value="1"/>
</dbReference>
<dbReference type="PROSITE" id="PS51279">
    <property type="entry name" value="BCNT_C"/>
    <property type="match status" value="1"/>
</dbReference>
<protein>
    <recommendedName>
        <fullName>SWR1-complex protein 5</fullName>
    </recommendedName>
</protein>
<proteinExistence type="inferred from homology"/>
<keyword id="KW-0010">Activator</keyword>
<keyword id="KW-0156">Chromatin regulator</keyword>
<keyword id="KW-0539">Nucleus</keyword>
<keyword id="KW-1185">Reference proteome</keyword>
<keyword id="KW-0804">Transcription</keyword>
<keyword id="KW-0805">Transcription regulation</keyword>
<accession>Q754T8</accession>
<name>SWC5_EREGS</name>
<gene>
    <name type="primary">SWC5</name>
    <name type="ordered locus">AFL017W</name>
</gene>
<evidence type="ECO:0000250" key="1"/>
<evidence type="ECO:0000255" key="2">
    <source>
        <dbReference type="PROSITE-ProRule" id="PRU00610"/>
    </source>
</evidence>
<evidence type="ECO:0000256" key="3">
    <source>
        <dbReference type="SAM" id="MobiDB-lite"/>
    </source>
</evidence>
<evidence type="ECO:0000305" key="4"/>
<comment type="function">
    <text evidence="1">Component of the SWR1 complex which mediates the ATP-dependent exchange of histone H2A for the H2A variant HZT1 leading to transcriptional regulation of selected genes by chromatin remodeling. Involved in chromosome stability (By similarity).</text>
</comment>
<comment type="subunit">
    <text evidence="1">Component of the SWR1 chromatin remodeling complex.</text>
</comment>
<comment type="subcellular location">
    <subcellularLocation>
        <location evidence="1">Nucleus</location>
    </subcellularLocation>
</comment>
<comment type="similarity">
    <text evidence="4">Belongs to the SWC5 family.</text>
</comment>
<feature type="chain" id="PRO_0000212501" description="SWR1-complex protein 5">
    <location>
        <begin position="1"/>
        <end position="286"/>
    </location>
</feature>
<feature type="domain" description="BCNT-C" evidence="2">
    <location>
        <begin position="203"/>
        <end position="280"/>
    </location>
</feature>
<feature type="region of interest" description="Disordered" evidence="3">
    <location>
        <begin position="1"/>
        <end position="90"/>
    </location>
</feature>
<feature type="compositionally biased region" description="Acidic residues" evidence="3">
    <location>
        <begin position="18"/>
        <end position="32"/>
    </location>
</feature>
<feature type="compositionally biased region" description="Acidic residues" evidence="3">
    <location>
        <begin position="53"/>
        <end position="62"/>
    </location>
</feature>
<sequence>MIAPTEPTEGNSRASVLEFDEEGYVESEDEDFDPSKPADDDKEEELSDKSDGDYQEADEEAEKYDYSHIESSEGGLVSTRNARRLQHEREQREKYEHFEMQGVSSRAGELWAQLQEESQARLHDTSSVMHAGGEAGKDRMQEEQIMIERAYWFAGEMVREKKMVLKSSAEAQEYLNSLKFKPKELVPSTMQEMDGGSKLRRPLKRPPILEQIIAGALKPKLTTLEKSKLDWATYVDKEGINEELQLFNKDGYLAKQDFLRKVDGIQNEQYKELRRQELQKNGAQGM</sequence>
<reference key="1">
    <citation type="journal article" date="2004" name="Science">
        <title>The Ashbya gossypii genome as a tool for mapping the ancient Saccharomyces cerevisiae genome.</title>
        <authorList>
            <person name="Dietrich F.S."/>
            <person name="Voegeli S."/>
            <person name="Brachat S."/>
            <person name="Lerch A."/>
            <person name="Gates K."/>
            <person name="Steiner S."/>
            <person name="Mohr C."/>
            <person name="Poehlmann R."/>
            <person name="Luedi P."/>
            <person name="Choi S."/>
            <person name="Wing R.A."/>
            <person name="Flavier A."/>
            <person name="Gaffney T.D."/>
            <person name="Philippsen P."/>
        </authorList>
    </citation>
    <scope>NUCLEOTIDE SEQUENCE [LARGE SCALE GENOMIC DNA]</scope>
    <source>
        <strain>ATCC 10895 / CBS 109.51 / FGSC 9923 / NRRL Y-1056</strain>
    </source>
</reference>
<reference key="2">
    <citation type="journal article" date="2013" name="G3 (Bethesda)">
        <title>Genomes of Ashbya fungi isolated from insects reveal four mating-type loci, numerous translocations, lack of transposons, and distinct gene duplications.</title>
        <authorList>
            <person name="Dietrich F.S."/>
            <person name="Voegeli S."/>
            <person name="Kuo S."/>
            <person name="Philippsen P."/>
        </authorList>
    </citation>
    <scope>GENOME REANNOTATION</scope>
    <source>
        <strain>ATCC 10895 / CBS 109.51 / FGSC 9923 / NRRL Y-1056</strain>
    </source>
</reference>
<organism>
    <name type="scientific">Eremothecium gossypii (strain ATCC 10895 / CBS 109.51 / FGSC 9923 / NRRL Y-1056)</name>
    <name type="common">Yeast</name>
    <name type="synonym">Ashbya gossypii</name>
    <dbReference type="NCBI Taxonomy" id="284811"/>
    <lineage>
        <taxon>Eukaryota</taxon>
        <taxon>Fungi</taxon>
        <taxon>Dikarya</taxon>
        <taxon>Ascomycota</taxon>
        <taxon>Saccharomycotina</taxon>
        <taxon>Saccharomycetes</taxon>
        <taxon>Saccharomycetales</taxon>
        <taxon>Saccharomycetaceae</taxon>
        <taxon>Eremothecium</taxon>
    </lineage>
</organism>